<sequence>MSDMHSLLIAAILGVVEGLTEFLPVSSTGHMIIVGHLLGFEGDTAKTFEVVIQLGSILAVVVMFWRRLFGLIGIHFGRPLQHEGESKGRLTLIHILLGMIPAVVLGLLFHDTIKSLFNPINVMYALVVGGLLLIAAECLKPKEPRAPGLDDMTYRQAFMIGCFQCLALWPGFSRSGATISGGMLMGVSRYAASEFSFLLAVPMMMGATALDLYKSWGFLTTGDIPMFAVGFITAFVVALIAIKTFLQLIKRISFIPFAIYRFIVAAAVYVVFF</sequence>
<accession>B2U1G1</accession>
<feature type="chain" id="PRO_1000197406" description="Undecaprenyl-diphosphatase">
    <location>
        <begin position="1"/>
        <end position="273"/>
    </location>
</feature>
<feature type="transmembrane region" description="Helical" evidence="1">
    <location>
        <begin position="6"/>
        <end position="26"/>
    </location>
</feature>
<feature type="transmembrane region" description="Helical" evidence="1">
    <location>
        <begin position="45"/>
        <end position="65"/>
    </location>
</feature>
<feature type="transmembrane region" description="Helical" evidence="1">
    <location>
        <begin position="90"/>
        <end position="110"/>
    </location>
</feature>
<feature type="transmembrane region" description="Helical" evidence="1">
    <location>
        <begin position="116"/>
        <end position="136"/>
    </location>
</feature>
<feature type="transmembrane region" description="Helical" evidence="1">
    <location>
        <begin position="190"/>
        <end position="210"/>
    </location>
</feature>
<feature type="transmembrane region" description="Helical" evidence="1">
    <location>
        <begin position="222"/>
        <end position="242"/>
    </location>
</feature>
<feature type="transmembrane region" description="Helical" evidence="1">
    <location>
        <begin position="252"/>
        <end position="272"/>
    </location>
</feature>
<comment type="function">
    <text evidence="1">Catalyzes the dephosphorylation of undecaprenyl diphosphate (UPP). Confers resistance to bacitracin.</text>
</comment>
<comment type="catalytic activity">
    <reaction evidence="1">
        <text>di-trans,octa-cis-undecaprenyl diphosphate + H2O = di-trans,octa-cis-undecaprenyl phosphate + phosphate + H(+)</text>
        <dbReference type="Rhea" id="RHEA:28094"/>
        <dbReference type="ChEBI" id="CHEBI:15377"/>
        <dbReference type="ChEBI" id="CHEBI:15378"/>
        <dbReference type="ChEBI" id="CHEBI:43474"/>
        <dbReference type="ChEBI" id="CHEBI:58405"/>
        <dbReference type="ChEBI" id="CHEBI:60392"/>
        <dbReference type="EC" id="3.6.1.27"/>
    </reaction>
</comment>
<comment type="subcellular location">
    <subcellularLocation>
        <location evidence="1">Cell inner membrane</location>
        <topology evidence="1">Multi-pass membrane protein</topology>
    </subcellularLocation>
</comment>
<comment type="miscellaneous">
    <text>Bacitracin is thought to be involved in the inhibition of peptidoglycan synthesis by sequestering undecaprenyl diphosphate, thereby reducing the pool of lipid carrier available.</text>
</comment>
<comment type="similarity">
    <text evidence="1">Belongs to the UppP family.</text>
</comment>
<evidence type="ECO:0000255" key="1">
    <source>
        <dbReference type="HAMAP-Rule" id="MF_01006"/>
    </source>
</evidence>
<dbReference type="EC" id="3.6.1.27" evidence="1"/>
<dbReference type="EMBL" id="CP001063">
    <property type="protein sequence ID" value="ACD08566.1"/>
    <property type="molecule type" value="Genomic_DNA"/>
</dbReference>
<dbReference type="SMR" id="B2U1G1"/>
<dbReference type="STRING" id="344609.SbBS512_E3488"/>
<dbReference type="KEGG" id="sbc:SbBS512_E3488"/>
<dbReference type="HOGENOM" id="CLU_060296_2_0_6"/>
<dbReference type="Proteomes" id="UP000001030">
    <property type="component" value="Chromosome"/>
</dbReference>
<dbReference type="GO" id="GO:0005886">
    <property type="term" value="C:plasma membrane"/>
    <property type="evidence" value="ECO:0007669"/>
    <property type="project" value="UniProtKB-SubCell"/>
</dbReference>
<dbReference type="GO" id="GO:0050380">
    <property type="term" value="F:undecaprenyl-diphosphatase activity"/>
    <property type="evidence" value="ECO:0007669"/>
    <property type="project" value="UniProtKB-UniRule"/>
</dbReference>
<dbReference type="GO" id="GO:0071555">
    <property type="term" value="P:cell wall organization"/>
    <property type="evidence" value="ECO:0007669"/>
    <property type="project" value="UniProtKB-KW"/>
</dbReference>
<dbReference type="GO" id="GO:0009252">
    <property type="term" value="P:peptidoglycan biosynthetic process"/>
    <property type="evidence" value="ECO:0007669"/>
    <property type="project" value="UniProtKB-KW"/>
</dbReference>
<dbReference type="GO" id="GO:0008360">
    <property type="term" value="P:regulation of cell shape"/>
    <property type="evidence" value="ECO:0007669"/>
    <property type="project" value="UniProtKB-KW"/>
</dbReference>
<dbReference type="GO" id="GO:0046677">
    <property type="term" value="P:response to antibiotic"/>
    <property type="evidence" value="ECO:0007669"/>
    <property type="project" value="UniProtKB-UniRule"/>
</dbReference>
<dbReference type="HAMAP" id="MF_01006">
    <property type="entry name" value="Undec_diphosphatase"/>
    <property type="match status" value="1"/>
</dbReference>
<dbReference type="InterPro" id="IPR003824">
    <property type="entry name" value="UppP"/>
</dbReference>
<dbReference type="NCBIfam" id="NF001388">
    <property type="entry name" value="PRK00281.1-1"/>
    <property type="match status" value="1"/>
</dbReference>
<dbReference type="NCBIfam" id="NF001389">
    <property type="entry name" value="PRK00281.1-2"/>
    <property type="match status" value="1"/>
</dbReference>
<dbReference type="NCBIfam" id="NF001390">
    <property type="entry name" value="PRK00281.1-4"/>
    <property type="match status" value="1"/>
</dbReference>
<dbReference type="NCBIfam" id="TIGR00753">
    <property type="entry name" value="undec_PP_bacA"/>
    <property type="match status" value="1"/>
</dbReference>
<dbReference type="PANTHER" id="PTHR30622">
    <property type="entry name" value="UNDECAPRENYL-DIPHOSPHATASE"/>
    <property type="match status" value="1"/>
</dbReference>
<dbReference type="PANTHER" id="PTHR30622:SF3">
    <property type="entry name" value="UNDECAPRENYL-DIPHOSPHATASE"/>
    <property type="match status" value="1"/>
</dbReference>
<dbReference type="Pfam" id="PF02673">
    <property type="entry name" value="BacA"/>
    <property type="match status" value="1"/>
</dbReference>
<name>UPPP_SHIB3</name>
<organism>
    <name type="scientific">Shigella boydii serotype 18 (strain CDC 3083-94 / BS512)</name>
    <dbReference type="NCBI Taxonomy" id="344609"/>
    <lineage>
        <taxon>Bacteria</taxon>
        <taxon>Pseudomonadati</taxon>
        <taxon>Pseudomonadota</taxon>
        <taxon>Gammaproteobacteria</taxon>
        <taxon>Enterobacterales</taxon>
        <taxon>Enterobacteriaceae</taxon>
        <taxon>Shigella</taxon>
    </lineage>
</organism>
<gene>
    <name evidence="1" type="primary">uppP</name>
    <name type="ordered locus">SbBS512_E3488</name>
</gene>
<keyword id="KW-0046">Antibiotic resistance</keyword>
<keyword id="KW-0997">Cell inner membrane</keyword>
<keyword id="KW-1003">Cell membrane</keyword>
<keyword id="KW-0133">Cell shape</keyword>
<keyword id="KW-0961">Cell wall biogenesis/degradation</keyword>
<keyword id="KW-0378">Hydrolase</keyword>
<keyword id="KW-0472">Membrane</keyword>
<keyword id="KW-0573">Peptidoglycan synthesis</keyword>
<keyword id="KW-1185">Reference proteome</keyword>
<keyword id="KW-0812">Transmembrane</keyword>
<keyword id="KW-1133">Transmembrane helix</keyword>
<reference key="1">
    <citation type="submission" date="2008-05" db="EMBL/GenBank/DDBJ databases">
        <title>Complete sequence of Shigella boydii serotype 18 strain BS512.</title>
        <authorList>
            <person name="Rasko D.A."/>
            <person name="Rosovitz M."/>
            <person name="Maurelli A.T."/>
            <person name="Myers G."/>
            <person name="Seshadri R."/>
            <person name="Cer R."/>
            <person name="Jiang L."/>
            <person name="Ravel J."/>
            <person name="Sebastian Y."/>
        </authorList>
    </citation>
    <scope>NUCLEOTIDE SEQUENCE [LARGE SCALE GENOMIC DNA]</scope>
    <source>
        <strain>CDC 3083-94 / BS512</strain>
    </source>
</reference>
<proteinExistence type="inferred from homology"/>
<protein>
    <recommendedName>
        <fullName evidence="1">Undecaprenyl-diphosphatase</fullName>
        <ecNumber evidence="1">3.6.1.27</ecNumber>
    </recommendedName>
    <alternativeName>
        <fullName evidence="1">Bacitracin resistance protein</fullName>
    </alternativeName>
    <alternativeName>
        <fullName evidence="1">Undecaprenyl pyrophosphate phosphatase</fullName>
    </alternativeName>
</protein>